<organism>
    <name type="scientific">Streptococcus pyogenes serotype M18 (strain MGAS8232)</name>
    <dbReference type="NCBI Taxonomy" id="186103"/>
    <lineage>
        <taxon>Bacteria</taxon>
        <taxon>Bacillati</taxon>
        <taxon>Bacillota</taxon>
        <taxon>Bacilli</taxon>
        <taxon>Lactobacillales</taxon>
        <taxon>Streptococcaceae</taxon>
        <taxon>Streptococcus</taxon>
    </lineage>
</organism>
<sequence length="172" mass="19961">MEYFNVGKIVNTQGLQGEMRVLSVSDFAEERFKKGSQLALFDDKDQFVQEVTIVSHRKQKHFDIIKFKDMYHINAIEKYKGYTLKVSKANQGDLQEGEFYYHQIIGMAVYEKDRLIGYVKEILQPGANDVWVVKRQGKRDLLLPYIPPVVLSVDVPNKRVDVELMEGLDDED</sequence>
<reference key="1">
    <citation type="journal article" date="2002" name="Proc. Natl. Acad. Sci. U.S.A.">
        <title>Genome sequence and comparative microarray analysis of serotype M18 group A Streptococcus strains associated with acute rheumatic fever outbreaks.</title>
        <authorList>
            <person name="Smoot J.C."/>
            <person name="Barbian K.D."/>
            <person name="Van Gompel J.J."/>
            <person name="Smoot L.M."/>
            <person name="Chaussee M.S."/>
            <person name="Sylva G.L."/>
            <person name="Sturdevant D.E."/>
            <person name="Ricklefs S.M."/>
            <person name="Porcella S.F."/>
            <person name="Parkins L.D."/>
            <person name="Beres S.B."/>
            <person name="Campbell D.S."/>
            <person name="Smith T.M."/>
            <person name="Zhang Q."/>
            <person name="Kapur V."/>
            <person name="Daly J.A."/>
            <person name="Veasy L.G."/>
            <person name="Musser J.M."/>
        </authorList>
    </citation>
    <scope>NUCLEOTIDE SEQUENCE [LARGE SCALE GENOMIC DNA]</scope>
    <source>
        <strain>MGAS8232</strain>
    </source>
</reference>
<keyword id="KW-0143">Chaperone</keyword>
<keyword id="KW-0963">Cytoplasm</keyword>
<keyword id="KW-0690">Ribosome biogenesis</keyword>
<keyword id="KW-0698">rRNA processing</keyword>
<gene>
    <name evidence="1" type="primary">rimM</name>
    <name type="ordered locus">spyM18_0907</name>
</gene>
<proteinExistence type="inferred from homology"/>
<evidence type="ECO:0000255" key="1">
    <source>
        <dbReference type="HAMAP-Rule" id="MF_00014"/>
    </source>
</evidence>
<dbReference type="EMBL" id="AE009949">
    <property type="protein sequence ID" value="AAL97557.1"/>
    <property type="molecule type" value="Genomic_DNA"/>
</dbReference>
<dbReference type="RefSeq" id="WP_011017659.1">
    <property type="nucleotide sequence ID" value="NC_003485.1"/>
</dbReference>
<dbReference type="SMR" id="Q8P1F4"/>
<dbReference type="KEGG" id="spm:spyM18_0907"/>
<dbReference type="HOGENOM" id="CLU_077636_3_1_9"/>
<dbReference type="GO" id="GO:0005737">
    <property type="term" value="C:cytoplasm"/>
    <property type="evidence" value="ECO:0007669"/>
    <property type="project" value="UniProtKB-SubCell"/>
</dbReference>
<dbReference type="GO" id="GO:0005840">
    <property type="term" value="C:ribosome"/>
    <property type="evidence" value="ECO:0007669"/>
    <property type="project" value="InterPro"/>
</dbReference>
<dbReference type="GO" id="GO:0043022">
    <property type="term" value="F:ribosome binding"/>
    <property type="evidence" value="ECO:0007669"/>
    <property type="project" value="InterPro"/>
</dbReference>
<dbReference type="GO" id="GO:0042274">
    <property type="term" value="P:ribosomal small subunit biogenesis"/>
    <property type="evidence" value="ECO:0007669"/>
    <property type="project" value="UniProtKB-UniRule"/>
</dbReference>
<dbReference type="GO" id="GO:0006364">
    <property type="term" value="P:rRNA processing"/>
    <property type="evidence" value="ECO:0007669"/>
    <property type="project" value="UniProtKB-UniRule"/>
</dbReference>
<dbReference type="Gene3D" id="2.30.30.240">
    <property type="entry name" value="PRC-barrel domain"/>
    <property type="match status" value="1"/>
</dbReference>
<dbReference type="Gene3D" id="2.40.30.60">
    <property type="entry name" value="RimM"/>
    <property type="match status" value="1"/>
</dbReference>
<dbReference type="HAMAP" id="MF_00014">
    <property type="entry name" value="Ribosome_mat_RimM"/>
    <property type="match status" value="1"/>
</dbReference>
<dbReference type="InterPro" id="IPR027275">
    <property type="entry name" value="PRC-brl_dom"/>
</dbReference>
<dbReference type="InterPro" id="IPR011033">
    <property type="entry name" value="PRC_barrel-like_sf"/>
</dbReference>
<dbReference type="InterPro" id="IPR011961">
    <property type="entry name" value="RimM"/>
</dbReference>
<dbReference type="InterPro" id="IPR002676">
    <property type="entry name" value="RimM_N"/>
</dbReference>
<dbReference type="InterPro" id="IPR036976">
    <property type="entry name" value="RimM_N_sf"/>
</dbReference>
<dbReference type="InterPro" id="IPR009000">
    <property type="entry name" value="Transl_B-barrel_sf"/>
</dbReference>
<dbReference type="NCBIfam" id="TIGR02273">
    <property type="entry name" value="16S_RimM"/>
    <property type="match status" value="1"/>
</dbReference>
<dbReference type="PANTHER" id="PTHR33692">
    <property type="entry name" value="RIBOSOME MATURATION FACTOR RIMM"/>
    <property type="match status" value="1"/>
</dbReference>
<dbReference type="PANTHER" id="PTHR33692:SF1">
    <property type="entry name" value="RIBOSOME MATURATION FACTOR RIMM"/>
    <property type="match status" value="1"/>
</dbReference>
<dbReference type="Pfam" id="PF05239">
    <property type="entry name" value="PRC"/>
    <property type="match status" value="1"/>
</dbReference>
<dbReference type="Pfam" id="PF01782">
    <property type="entry name" value="RimM"/>
    <property type="match status" value="1"/>
</dbReference>
<dbReference type="SUPFAM" id="SSF50346">
    <property type="entry name" value="PRC-barrel domain"/>
    <property type="match status" value="1"/>
</dbReference>
<dbReference type="SUPFAM" id="SSF50447">
    <property type="entry name" value="Translation proteins"/>
    <property type="match status" value="1"/>
</dbReference>
<accession>Q8P1F4</accession>
<comment type="function">
    <text evidence="1">An accessory protein needed during the final step in the assembly of 30S ribosomal subunit, possibly for assembly of the head region. Essential for efficient processing of 16S rRNA. May be needed both before and after RbfA during the maturation of 16S rRNA. It has affinity for free ribosomal 30S subunits but not for 70S ribosomes.</text>
</comment>
<comment type="subunit">
    <text evidence="1">Binds ribosomal protein uS19.</text>
</comment>
<comment type="subcellular location">
    <subcellularLocation>
        <location evidence="1">Cytoplasm</location>
    </subcellularLocation>
</comment>
<comment type="domain">
    <text evidence="1">The PRC barrel domain binds ribosomal protein uS19.</text>
</comment>
<comment type="similarity">
    <text evidence="1">Belongs to the RimM family.</text>
</comment>
<name>RIMM_STRP8</name>
<feature type="chain" id="PRO_0000163370" description="Ribosome maturation factor RimM">
    <location>
        <begin position="1"/>
        <end position="172"/>
    </location>
</feature>
<feature type="domain" description="PRC barrel" evidence="1">
    <location>
        <begin position="96"/>
        <end position="168"/>
    </location>
</feature>
<protein>
    <recommendedName>
        <fullName evidence="1">Ribosome maturation factor RimM</fullName>
    </recommendedName>
</protein>